<keyword id="KW-0028">Amino-acid biosynthesis</keyword>
<keyword id="KW-0963">Cytoplasm</keyword>
<keyword id="KW-0378">Hydrolase</keyword>
<keyword id="KW-0460">Magnesium</keyword>
<keyword id="KW-0479">Metal-binding</keyword>
<keyword id="KW-0486">Methionine biosynthesis</keyword>
<keyword id="KW-0539">Nucleus</keyword>
<keyword id="KW-1185">Reference proteome</keyword>
<name>ENOPH_CANGA</name>
<organism>
    <name type="scientific">Candida glabrata (strain ATCC 2001 / BCRC 20586 / JCM 3761 / NBRC 0622 / NRRL Y-65 / CBS 138)</name>
    <name type="common">Yeast</name>
    <name type="synonym">Nakaseomyces glabratus</name>
    <dbReference type="NCBI Taxonomy" id="284593"/>
    <lineage>
        <taxon>Eukaryota</taxon>
        <taxon>Fungi</taxon>
        <taxon>Dikarya</taxon>
        <taxon>Ascomycota</taxon>
        <taxon>Saccharomycotina</taxon>
        <taxon>Saccharomycetes</taxon>
        <taxon>Saccharomycetales</taxon>
        <taxon>Saccharomycetaceae</taxon>
        <taxon>Nakaseomyces</taxon>
    </lineage>
</organism>
<evidence type="ECO:0000255" key="1">
    <source>
        <dbReference type="HAMAP-Rule" id="MF_03117"/>
    </source>
</evidence>
<feature type="chain" id="PRO_0000393995" description="Enolase-phosphatase E1">
    <location>
        <begin position="1"/>
        <end position="251"/>
    </location>
</feature>
<feature type="binding site" evidence="1">
    <location>
        <position position="13"/>
    </location>
    <ligand>
        <name>Mg(2+)</name>
        <dbReference type="ChEBI" id="CHEBI:18420"/>
    </ligand>
</feature>
<feature type="binding site" evidence="1">
    <location>
        <position position="15"/>
    </location>
    <ligand>
        <name>Mg(2+)</name>
        <dbReference type="ChEBI" id="CHEBI:18420"/>
    </ligand>
</feature>
<feature type="binding site" evidence="1">
    <location>
        <begin position="137"/>
        <end position="138"/>
    </location>
    <ligand>
        <name>substrate</name>
    </ligand>
</feature>
<feature type="binding site" evidence="1">
    <location>
        <position position="183"/>
    </location>
    <ligand>
        <name>substrate</name>
    </ligand>
</feature>
<feature type="binding site" evidence="1">
    <location>
        <position position="210"/>
    </location>
    <ligand>
        <name>Mg(2+)</name>
        <dbReference type="ChEBI" id="CHEBI:18420"/>
    </ligand>
</feature>
<dbReference type="EC" id="3.1.3.77" evidence="1"/>
<dbReference type="EMBL" id="CR380958">
    <property type="protein sequence ID" value="CAG61799.1"/>
    <property type="molecule type" value="Genomic_DNA"/>
</dbReference>
<dbReference type="RefSeq" id="XP_448829.1">
    <property type="nucleotide sequence ID" value="XM_448829.1"/>
</dbReference>
<dbReference type="SMR" id="Q6FLR5"/>
<dbReference type="FunCoup" id="Q6FLR5">
    <property type="interactions" value="680"/>
</dbReference>
<dbReference type="STRING" id="284593.Q6FLR5"/>
<dbReference type="EnsemblFungi" id="CAGL0L01287g-T">
    <property type="protein sequence ID" value="CAGL0L01287g-T-p1"/>
    <property type="gene ID" value="CAGL0L01287g"/>
</dbReference>
<dbReference type="GeneID" id="2890920"/>
<dbReference type="KEGG" id="cgr:2890920"/>
<dbReference type="CGD" id="CAL0135438">
    <property type="gene designation" value="UTR4"/>
</dbReference>
<dbReference type="VEuPathDB" id="FungiDB:B1J91_L01287g"/>
<dbReference type="VEuPathDB" id="FungiDB:CAGL0L01287g"/>
<dbReference type="eggNOG" id="KOG2630">
    <property type="taxonomic scope" value="Eukaryota"/>
</dbReference>
<dbReference type="HOGENOM" id="CLU_023273_1_1_1"/>
<dbReference type="InParanoid" id="Q6FLR5"/>
<dbReference type="OMA" id="LQGMVWE"/>
<dbReference type="UniPathway" id="UPA00904">
    <property type="reaction ID" value="UER00876"/>
</dbReference>
<dbReference type="UniPathway" id="UPA00904">
    <property type="reaction ID" value="UER00877"/>
</dbReference>
<dbReference type="Proteomes" id="UP000002428">
    <property type="component" value="Chromosome L"/>
</dbReference>
<dbReference type="GO" id="GO:0005829">
    <property type="term" value="C:cytosol"/>
    <property type="evidence" value="ECO:0000314"/>
    <property type="project" value="CGD"/>
</dbReference>
<dbReference type="GO" id="GO:0005634">
    <property type="term" value="C:nucleus"/>
    <property type="evidence" value="ECO:0007669"/>
    <property type="project" value="UniProtKB-SubCell"/>
</dbReference>
<dbReference type="GO" id="GO:0043874">
    <property type="term" value="F:acireductone synthase activity"/>
    <property type="evidence" value="ECO:0007669"/>
    <property type="project" value="UniProtKB-EC"/>
</dbReference>
<dbReference type="GO" id="GO:0000287">
    <property type="term" value="F:magnesium ion binding"/>
    <property type="evidence" value="ECO:0007669"/>
    <property type="project" value="UniProtKB-UniRule"/>
</dbReference>
<dbReference type="GO" id="GO:0019509">
    <property type="term" value="P:L-methionine salvage from methylthioadenosine"/>
    <property type="evidence" value="ECO:0007669"/>
    <property type="project" value="UniProtKB-UniRule"/>
</dbReference>
<dbReference type="CDD" id="cd01629">
    <property type="entry name" value="HAD_EP"/>
    <property type="match status" value="1"/>
</dbReference>
<dbReference type="Gene3D" id="1.10.720.60">
    <property type="match status" value="1"/>
</dbReference>
<dbReference type="Gene3D" id="3.40.50.1000">
    <property type="entry name" value="HAD superfamily/HAD-like"/>
    <property type="match status" value="1"/>
</dbReference>
<dbReference type="HAMAP" id="MF_03117">
    <property type="entry name" value="Salvage_MtnC_euk"/>
    <property type="match status" value="1"/>
</dbReference>
<dbReference type="InterPro" id="IPR023943">
    <property type="entry name" value="Enolase-ppase_E1"/>
</dbReference>
<dbReference type="InterPro" id="IPR027511">
    <property type="entry name" value="ENOPH1_eukaryotes"/>
</dbReference>
<dbReference type="InterPro" id="IPR036412">
    <property type="entry name" value="HAD-like_sf"/>
</dbReference>
<dbReference type="InterPro" id="IPR023214">
    <property type="entry name" value="HAD_sf"/>
</dbReference>
<dbReference type="NCBIfam" id="TIGR01691">
    <property type="entry name" value="enolase-ppase"/>
    <property type="match status" value="1"/>
</dbReference>
<dbReference type="PANTHER" id="PTHR20371">
    <property type="entry name" value="ENOLASE-PHOSPHATASE E1"/>
    <property type="match status" value="1"/>
</dbReference>
<dbReference type="PANTHER" id="PTHR20371:SF1">
    <property type="entry name" value="ENOLASE-PHOSPHATASE E1"/>
    <property type="match status" value="1"/>
</dbReference>
<dbReference type="Pfam" id="PF00702">
    <property type="entry name" value="Hydrolase"/>
    <property type="match status" value="1"/>
</dbReference>
<dbReference type="SFLD" id="SFLDG01133">
    <property type="entry name" value="C1.5.4:_Enolase-phosphatase_Li"/>
    <property type="match status" value="1"/>
</dbReference>
<dbReference type="SFLD" id="SFLDG01129">
    <property type="entry name" value="C1.5:_HAD__Beta-PGM__Phosphata"/>
    <property type="match status" value="1"/>
</dbReference>
<dbReference type="SUPFAM" id="SSF56784">
    <property type="entry name" value="HAD-like"/>
    <property type="match status" value="1"/>
</dbReference>
<protein>
    <recommendedName>
        <fullName evidence="1">Enolase-phosphatase E1</fullName>
        <ecNumber evidence="1">3.1.3.77</ecNumber>
    </recommendedName>
    <alternativeName>
        <fullName evidence="1">2,3-diketo-5-methylthio-1-phosphopentane phosphatase</fullName>
    </alternativeName>
</protein>
<proteinExistence type="inferred from homology"/>
<accession>Q6FLR5</accession>
<gene>
    <name evidence="1" type="primary">UTR4</name>
    <name type="ordered locus">CAGL0L01287g</name>
</gene>
<reference key="1">
    <citation type="journal article" date="2004" name="Nature">
        <title>Genome evolution in yeasts.</title>
        <authorList>
            <person name="Dujon B."/>
            <person name="Sherman D."/>
            <person name="Fischer G."/>
            <person name="Durrens P."/>
            <person name="Casaregola S."/>
            <person name="Lafontaine I."/>
            <person name="de Montigny J."/>
            <person name="Marck C."/>
            <person name="Neuveglise C."/>
            <person name="Talla E."/>
            <person name="Goffard N."/>
            <person name="Frangeul L."/>
            <person name="Aigle M."/>
            <person name="Anthouard V."/>
            <person name="Babour A."/>
            <person name="Barbe V."/>
            <person name="Barnay S."/>
            <person name="Blanchin S."/>
            <person name="Beckerich J.-M."/>
            <person name="Beyne E."/>
            <person name="Bleykasten C."/>
            <person name="Boisrame A."/>
            <person name="Boyer J."/>
            <person name="Cattolico L."/>
            <person name="Confanioleri F."/>
            <person name="de Daruvar A."/>
            <person name="Despons L."/>
            <person name="Fabre E."/>
            <person name="Fairhead C."/>
            <person name="Ferry-Dumazet H."/>
            <person name="Groppi A."/>
            <person name="Hantraye F."/>
            <person name="Hennequin C."/>
            <person name="Jauniaux N."/>
            <person name="Joyet P."/>
            <person name="Kachouri R."/>
            <person name="Kerrest A."/>
            <person name="Koszul R."/>
            <person name="Lemaire M."/>
            <person name="Lesur I."/>
            <person name="Ma L."/>
            <person name="Muller H."/>
            <person name="Nicaud J.-M."/>
            <person name="Nikolski M."/>
            <person name="Oztas S."/>
            <person name="Ozier-Kalogeropoulos O."/>
            <person name="Pellenz S."/>
            <person name="Potier S."/>
            <person name="Richard G.-F."/>
            <person name="Straub M.-L."/>
            <person name="Suleau A."/>
            <person name="Swennen D."/>
            <person name="Tekaia F."/>
            <person name="Wesolowski-Louvel M."/>
            <person name="Westhof E."/>
            <person name="Wirth B."/>
            <person name="Zeniou-Meyer M."/>
            <person name="Zivanovic Y."/>
            <person name="Bolotin-Fukuhara M."/>
            <person name="Thierry A."/>
            <person name="Bouchier C."/>
            <person name="Caudron B."/>
            <person name="Scarpelli C."/>
            <person name="Gaillardin C."/>
            <person name="Weissenbach J."/>
            <person name="Wincker P."/>
            <person name="Souciet J.-L."/>
        </authorList>
    </citation>
    <scope>NUCLEOTIDE SEQUENCE [LARGE SCALE GENOMIC DNA]</scope>
    <source>
        <strain>ATCC 2001 / BCRC 20586 / JCM 3761 / NBRC 0622 / NRRL Y-65 / CBS 138</strain>
    </source>
</reference>
<sequence>MSPDPKYSAYLLDIEGTLCPLSFVKDTLYPFFVLHVQRIVYENFNEEHPKDEFIAEQLAKYDIKEEGQAGKNKLVEHLLDLVANDTKDSTLKALQGHVWEVGYNSGELEVPLYPDVIDFLVRNDGRGDDKVPVYIYSSGSIHAQKLLFGHVKNSGNSHAKIAGNWDLNRFIDGYFDINTAGKKTESNSYKKILDEIKMTDKPHDVLFLSDNAKELDAAKECGISVGLAMRAGNVTVPNAIDYKQYFQFTKL</sequence>
<comment type="function">
    <text evidence="1">Bifunctional enzyme that catalyzes the enolization of 2,3-diketo-5-methylthiopentyl-1-phosphate (DK-MTP-1-P) into the intermediate 2-hydroxy-3-keto-5-methylthiopentenyl-1-phosphate (HK-MTPenyl-1-P), which is then dephosphorylated to form the acireductone 1,2-dihydroxy-3-keto-5-methylthiopentene (DHK-MTPene).</text>
</comment>
<comment type="catalytic activity">
    <reaction evidence="1">
        <text>5-methylsulfanyl-2,3-dioxopentyl phosphate + H2O = 1,2-dihydroxy-5-(methylsulfanyl)pent-1-en-3-one + phosphate</text>
        <dbReference type="Rhea" id="RHEA:21700"/>
        <dbReference type="ChEBI" id="CHEBI:15377"/>
        <dbReference type="ChEBI" id="CHEBI:43474"/>
        <dbReference type="ChEBI" id="CHEBI:49252"/>
        <dbReference type="ChEBI" id="CHEBI:58828"/>
        <dbReference type="EC" id="3.1.3.77"/>
    </reaction>
</comment>
<comment type="cofactor">
    <cofactor evidence="1">
        <name>Mg(2+)</name>
        <dbReference type="ChEBI" id="CHEBI:18420"/>
    </cofactor>
    <text evidence="1">Binds 1 Mg(2+) ion per subunit.</text>
</comment>
<comment type="pathway">
    <text evidence="1">Amino-acid biosynthesis; L-methionine biosynthesis via salvage pathway; L-methionine from S-methyl-5-thio-alpha-D-ribose 1-phosphate: step 3/6.</text>
</comment>
<comment type="pathway">
    <text evidence="1">Amino-acid biosynthesis; L-methionine biosynthesis via salvage pathway; L-methionine from S-methyl-5-thio-alpha-D-ribose 1-phosphate: step 4/6.</text>
</comment>
<comment type="subunit">
    <text evidence="1">Monomer.</text>
</comment>
<comment type="subcellular location">
    <subcellularLocation>
        <location evidence="1">Cytoplasm</location>
    </subcellularLocation>
    <subcellularLocation>
        <location evidence="1">Nucleus</location>
    </subcellularLocation>
</comment>
<comment type="similarity">
    <text evidence="1">Belongs to the HAD-like hydrolase superfamily. MasA/MtnC family.</text>
</comment>